<organism>
    <name type="scientific">Escherichia coli O6:H1 (strain CFT073 / ATCC 700928 / UPEC)</name>
    <dbReference type="NCBI Taxonomy" id="199310"/>
    <lineage>
        <taxon>Bacteria</taxon>
        <taxon>Pseudomonadati</taxon>
        <taxon>Pseudomonadota</taxon>
        <taxon>Gammaproteobacteria</taxon>
        <taxon>Enterobacterales</taxon>
        <taxon>Enterobacteriaceae</taxon>
        <taxon>Escherichia</taxon>
    </lineage>
</organism>
<comment type="catalytic activity">
    <reaction evidence="1">
        <text>adenine + H2O + H(+) = hypoxanthine + NH4(+)</text>
        <dbReference type="Rhea" id="RHEA:23688"/>
        <dbReference type="ChEBI" id="CHEBI:15377"/>
        <dbReference type="ChEBI" id="CHEBI:15378"/>
        <dbReference type="ChEBI" id="CHEBI:16708"/>
        <dbReference type="ChEBI" id="CHEBI:17368"/>
        <dbReference type="ChEBI" id="CHEBI:28938"/>
        <dbReference type="EC" id="3.5.4.2"/>
    </reaction>
</comment>
<comment type="cofactor">
    <cofactor evidence="1">
        <name>Mn(2+)</name>
        <dbReference type="ChEBI" id="CHEBI:29035"/>
    </cofactor>
</comment>
<comment type="subunit">
    <text evidence="1">Homodimer.</text>
</comment>
<comment type="similarity">
    <text evidence="1">Belongs to the metallo-dependent hydrolases superfamily. Adenine deaminase family.</text>
</comment>
<protein>
    <recommendedName>
        <fullName evidence="1">Adenine deaminase</fullName>
        <shortName evidence="1">Adenase</shortName>
        <shortName evidence="1">Adenine aminase</shortName>
        <ecNumber evidence="1">3.5.4.2</ecNumber>
    </recommendedName>
</protein>
<sequence length="588" mass="63786">MNNSINHKFHHISRAEYQELLAVSRGDAVADYIIDNVSILDLINGGEISGPIVIKGRYIAGVGAEYADAPALQRIDARGATAVPGFIDAHLHIESSMMTPVTFETATLPRGLTTVICDPHEIVNVMGEAGFAWFARCAEQARQNQYLQVSSCVPALEGCDVNGASFTLEQMLAWRDHPQVTGLAEMMDYPGIISGQNALLDKLDAFRHLTLDGHCPGLGGKELNAYIAAGIENCHESYQLEEGRRKLQLGMSLMIREGSAARNLNALAPLINEFNSPQCMLCTDDRNPWEIAHEGHIDALIRRLIEQHNVPLHVAYRVASWSTARHFGLNHLGLLAPGKQADIVLLSDARKVTVQQVLVKGEPIDAQTLQAEESARLAQSAPPYGNTIDRQPVSASDFALQFTPGKRYRVIEVIHNELITHSRSSVYSENGFDRDDVCFIAVLERYGQRLAPACGLLGGFGLNEGALAATVSHDSHNIVVIGRSAEEMALAVNQVIQDGGGLCVVRNGQVQSHLPLPIAGLMSTDTAQSLAEQIDALKAAARECGPLPDEPFIQMAFLSLPVIPALKLTSQGLFDGEKFAFTTLEVTE</sequence>
<dbReference type="EC" id="3.5.4.2" evidence="1"/>
<dbReference type="EMBL" id="AE014075">
    <property type="protein sequence ID" value="AAN83023.1"/>
    <property type="molecule type" value="Genomic_DNA"/>
</dbReference>
<dbReference type="SMR" id="Q8FBX7"/>
<dbReference type="STRING" id="199310.c4589"/>
<dbReference type="DNASU" id="1039826"/>
<dbReference type="KEGG" id="ecc:c4589"/>
<dbReference type="eggNOG" id="COG1001">
    <property type="taxonomic scope" value="Bacteria"/>
</dbReference>
<dbReference type="HOGENOM" id="CLU_027935_0_0_6"/>
<dbReference type="BioCyc" id="ECOL199310:C4589-MONOMER"/>
<dbReference type="Proteomes" id="UP000001410">
    <property type="component" value="Chromosome"/>
</dbReference>
<dbReference type="GO" id="GO:0000034">
    <property type="term" value="F:adenine deaminase activity"/>
    <property type="evidence" value="ECO:0007669"/>
    <property type="project" value="UniProtKB-UniRule"/>
</dbReference>
<dbReference type="GO" id="GO:0006146">
    <property type="term" value="P:adenine catabolic process"/>
    <property type="evidence" value="ECO:0007669"/>
    <property type="project" value="InterPro"/>
</dbReference>
<dbReference type="CDD" id="cd01295">
    <property type="entry name" value="AdeC"/>
    <property type="match status" value="1"/>
</dbReference>
<dbReference type="FunFam" id="3.20.20.140:FF:000016">
    <property type="entry name" value="Adenine deaminase"/>
    <property type="match status" value="1"/>
</dbReference>
<dbReference type="Gene3D" id="3.20.20.140">
    <property type="entry name" value="Metal-dependent hydrolases"/>
    <property type="match status" value="1"/>
</dbReference>
<dbReference type="Gene3D" id="2.30.40.10">
    <property type="entry name" value="Urease, subunit C, domain 1"/>
    <property type="match status" value="1"/>
</dbReference>
<dbReference type="HAMAP" id="MF_01518">
    <property type="entry name" value="Adenine_deamin"/>
    <property type="match status" value="1"/>
</dbReference>
<dbReference type="InterPro" id="IPR006679">
    <property type="entry name" value="Adenine_deam"/>
</dbReference>
<dbReference type="InterPro" id="IPR026912">
    <property type="entry name" value="Adenine_deam_C"/>
</dbReference>
<dbReference type="InterPro" id="IPR006680">
    <property type="entry name" value="Amidohydro-rel"/>
</dbReference>
<dbReference type="InterPro" id="IPR011059">
    <property type="entry name" value="Metal-dep_hydrolase_composite"/>
</dbReference>
<dbReference type="InterPro" id="IPR032466">
    <property type="entry name" value="Metal_Hydrolase"/>
</dbReference>
<dbReference type="NCBIfam" id="TIGR01178">
    <property type="entry name" value="ade"/>
    <property type="match status" value="1"/>
</dbReference>
<dbReference type="NCBIfam" id="NF007457">
    <property type="entry name" value="PRK10027.1"/>
    <property type="match status" value="1"/>
</dbReference>
<dbReference type="PANTHER" id="PTHR11113:SF2">
    <property type="entry name" value="ADENINE DEAMINASE"/>
    <property type="match status" value="1"/>
</dbReference>
<dbReference type="PANTHER" id="PTHR11113">
    <property type="entry name" value="N-ACETYLGLUCOSAMINE-6-PHOSPHATE DEACETYLASE"/>
    <property type="match status" value="1"/>
</dbReference>
<dbReference type="Pfam" id="PF13382">
    <property type="entry name" value="Adenine_deam_C"/>
    <property type="match status" value="1"/>
</dbReference>
<dbReference type="Pfam" id="PF01979">
    <property type="entry name" value="Amidohydro_1"/>
    <property type="match status" value="1"/>
</dbReference>
<dbReference type="SUPFAM" id="SSF51338">
    <property type="entry name" value="Composite domain of metallo-dependent hydrolases"/>
    <property type="match status" value="1"/>
</dbReference>
<dbReference type="SUPFAM" id="SSF51556">
    <property type="entry name" value="Metallo-dependent hydrolases"/>
    <property type="match status" value="1"/>
</dbReference>
<evidence type="ECO:0000255" key="1">
    <source>
        <dbReference type="HAMAP-Rule" id="MF_01518"/>
    </source>
</evidence>
<reference key="1">
    <citation type="journal article" date="2002" name="Proc. Natl. Acad. Sci. U.S.A.">
        <title>Extensive mosaic structure revealed by the complete genome sequence of uropathogenic Escherichia coli.</title>
        <authorList>
            <person name="Welch R.A."/>
            <person name="Burland V."/>
            <person name="Plunkett G. III"/>
            <person name="Redford P."/>
            <person name="Roesch P."/>
            <person name="Rasko D."/>
            <person name="Buckles E.L."/>
            <person name="Liou S.-R."/>
            <person name="Boutin A."/>
            <person name="Hackett J."/>
            <person name="Stroud D."/>
            <person name="Mayhew G.F."/>
            <person name="Rose D.J."/>
            <person name="Zhou S."/>
            <person name="Schwartz D.C."/>
            <person name="Perna N.T."/>
            <person name="Mobley H.L.T."/>
            <person name="Donnenberg M.S."/>
            <person name="Blattner F.R."/>
        </authorList>
    </citation>
    <scope>NUCLEOTIDE SEQUENCE [LARGE SCALE GENOMIC DNA]</scope>
    <source>
        <strain>CFT073 / ATCC 700928 / UPEC</strain>
    </source>
</reference>
<feature type="chain" id="PRO_0000142422" description="Adenine deaminase">
    <location>
        <begin position="1"/>
        <end position="588"/>
    </location>
</feature>
<keyword id="KW-0378">Hydrolase</keyword>
<keyword id="KW-0464">Manganese</keyword>
<keyword id="KW-1185">Reference proteome</keyword>
<gene>
    <name evidence="1" type="primary">ade</name>
    <name type="ordered locus">c4589</name>
</gene>
<name>ADEC_ECOL6</name>
<proteinExistence type="inferred from homology"/>
<accession>Q8FBX7</accession>